<evidence type="ECO:0000255" key="1">
    <source>
        <dbReference type="HAMAP-Rule" id="MF_00316"/>
    </source>
</evidence>
<proteinExistence type="inferred from homology"/>
<feature type="chain" id="PRO_1000019094" description="Molybdenum cofactor guanylyltransferase">
    <location>
        <begin position="1"/>
        <end position="196"/>
    </location>
</feature>
<feature type="binding site" evidence="1">
    <location>
        <begin position="14"/>
        <end position="16"/>
    </location>
    <ligand>
        <name>GTP</name>
        <dbReference type="ChEBI" id="CHEBI:37565"/>
    </ligand>
</feature>
<feature type="binding site" evidence="1">
    <location>
        <position position="27"/>
    </location>
    <ligand>
        <name>GTP</name>
        <dbReference type="ChEBI" id="CHEBI:37565"/>
    </ligand>
</feature>
<feature type="binding site" evidence="1">
    <location>
        <position position="73"/>
    </location>
    <ligand>
        <name>GTP</name>
        <dbReference type="ChEBI" id="CHEBI:37565"/>
    </ligand>
</feature>
<feature type="binding site" evidence="1">
    <location>
        <position position="106"/>
    </location>
    <ligand>
        <name>GTP</name>
        <dbReference type="ChEBI" id="CHEBI:37565"/>
    </ligand>
</feature>
<feature type="binding site" evidence="1">
    <location>
        <position position="106"/>
    </location>
    <ligand>
        <name>Mg(2+)</name>
        <dbReference type="ChEBI" id="CHEBI:18420"/>
    </ligand>
</feature>
<sequence>MADPSGSHLRAVILAGGAGRRLGGVDKALLILHGRTMLDHAIATVSGQVGAVALSAAGDPARFARFGIPVLEDGRHRGKGPLAGVLAGMRWAAASGGETLLSLPVDTPFAPRDLAARLGAAPAVAASHGRTHHLVALWPVAAADALERFLDGPGPYRVSGFAAEIGMRAVAFADERDPFVNINTQADLDAAEAGRC</sequence>
<accession>A5FZ90</accession>
<keyword id="KW-0963">Cytoplasm</keyword>
<keyword id="KW-0342">GTP-binding</keyword>
<keyword id="KW-0460">Magnesium</keyword>
<keyword id="KW-0479">Metal-binding</keyword>
<keyword id="KW-0501">Molybdenum cofactor biosynthesis</keyword>
<keyword id="KW-0547">Nucleotide-binding</keyword>
<keyword id="KW-1185">Reference proteome</keyword>
<keyword id="KW-0808">Transferase</keyword>
<reference key="1">
    <citation type="submission" date="2007-05" db="EMBL/GenBank/DDBJ databases">
        <title>Complete sequence of chromosome of Acidiphilium cryptum JF-5.</title>
        <authorList>
            <consortium name="US DOE Joint Genome Institute"/>
            <person name="Copeland A."/>
            <person name="Lucas S."/>
            <person name="Lapidus A."/>
            <person name="Barry K."/>
            <person name="Detter J.C."/>
            <person name="Glavina del Rio T."/>
            <person name="Hammon N."/>
            <person name="Israni S."/>
            <person name="Dalin E."/>
            <person name="Tice H."/>
            <person name="Pitluck S."/>
            <person name="Sims D."/>
            <person name="Brettin T."/>
            <person name="Bruce D."/>
            <person name="Han C."/>
            <person name="Schmutz J."/>
            <person name="Larimer F."/>
            <person name="Land M."/>
            <person name="Hauser L."/>
            <person name="Kyrpides N."/>
            <person name="Kim E."/>
            <person name="Magnuson T."/>
            <person name="Richardson P."/>
        </authorList>
    </citation>
    <scope>NUCLEOTIDE SEQUENCE [LARGE SCALE GENOMIC DNA]</scope>
    <source>
        <strain>JF-5</strain>
    </source>
</reference>
<gene>
    <name evidence="1" type="primary">mobA</name>
    <name type="ordered locus">Acry_1718</name>
</gene>
<dbReference type="EC" id="2.7.7.77" evidence="1"/>
<dbReference type="EMBL" id="CP000697">
    <property type="protein sequence ID" value="ABQ30922.1"/>
    <property type="molecule type" value="Genomic_DNA"/>
</dbReference>
<dbReference type="RefSeq" id="WP_011942440.1">
    <property type="nucleotide sequence ID" value="NC_009484.1"/>
</dbReference>
<dbReference type="SMR" id="A5FZ90"/>
<dbReference type="STRING" id="349163.Acry_1718"/>
<dbReference type="KEGG" id="acr:Acry_1718"/>
<dbReference type="eggNOG" id="COG0746">
    <property type="taxonomic scope" value="Bacteria"/>
</dbReference>
<dbReference type="HOGENOM" id="CLU_055597_5_0_5"/>
<dbReference type="Proteomes" id="UP000000245">
    <property type="component" value="Chromosome"/>
</dbReference>
<dbReference type="GO" id="GO:0005737">
    <property type="term" value="C:cytoplasm"/>
    <property type="evidence" value="ECO:0007669"/>
    <property type="project" value="UniProtKB-SubCell"/>
</dbReference>
<dbReference type="GO" id="GO:0005525">
    <property type="term" value="F:GTP binding"/>
    <property type="evidence" value="ECO:0007669"/>
    <property type="project" value="UniProtKB-UniRule"/>
</dbReference>
<dbReference type="GO" id="GO:0046872">
    <property type="term" value="F:metal ion binding"/>
    <property type="evidence" value="ECO:0007669"/>
    <property type="project" value="UniProtKB-KW"/>
</dbReference>
<dbReference type="GO" id="GO:0061603">
    <property type="term" value="F:molybdenum cofactor guanylyltransferase activity"/>
    <property type="evidence" value="ECO:0007669"/>
    <property type="project" value="UniProtKB-EC"/>
</dbReference>
<dbReference type="GO" id="GO:1902758">
    <property type="term" value="P:bis(molybdopterin guanine dinucleotide)molybdenum biosynthetic process"/>
    <property type="evidence" value="ECO:0007669"/>
    <property type="project" value="TreeGrafter"/>
</dbReference>
<dbReference type="CDD" id="cd02503">
    <property type="entry name" value="MobA"/>
    <property type="match status" value="1"/>
</dbReference>
<dbReference type="Gene3D" id="3.90.550.10">
    <property type="entry name" value="Spore Coat Polysaccharide Biosynthesis Protein SpsA, Chain A"/>
    <property type="match status" value="1"/>
</dbReference>
<dbReference type="HAMAP" id="MF_00316">
    <property type="entry name" value="MobA"/>
    <property type="match status" value="1"/>
</dbReference>
<dbReference type="InterPro" id="IPR025877">
    <property type="entry name" value="MobA-like_NTP_Trfase"/>
</dbReference>
<dbReference type="InterPro" id="IPR013482">
    <property type="entry name" value="Molybde_CF_guanTrfase"/>
</dbReference>
<dbReference type="InterPro" id="IPR029044">
    <property type="entry name" value="Nucleotide-diphossugar_trans"/>
</dbReference>
<dbReference type="NCBIfam" id="TIGR02665">
    <property type="entry name" value="molyb_mobA"/>
    <property type="match status" value="1"/>
</dbReference>
<dbReference type="PANTHER" id="PTHR19136">
    <property type="entry name" value="MOLYBDENUM COFACTOR GUANYLYLTRANSFERASE"/>
    <property type="match status" value="1"/>
</dbReference>
<dbReference type="PANTHER" id="PTHR19136:SF81">
    <property type="entry name" value="MOLYBDENUM COFACTOR GUANYLYLTRANSFERASE"/>
    <property type="match status" value="1"/>
</dbReference>
<dbReference type="Pfam" id="PF12804">
    <property type="entry name" value="NTP_transf_3"/>
    <property type="match status" value="1"/>
</dbReference>
<dbReference type="SUPFAM" id="SSF53448">
    <property type="entry name" value="Nucleotide-diphospho-sugar transferases"/>
    <property type="match status" value="1"/>
</dbReference>
<organism>
    <name type="scientific">Acidiphilium cryptum (strain JF-5)</name>
    <dbReference type="NCBI Taxonomy" id="349163"/>
    <lineage>
        <taxon>Bacteria</taxon>
        <taxon>Pseudomonadati</taxon>
        <taxon>Pseudomonadota</taxon>
        <taxon>Alphaproteobacteria</taxon>
        <taxon>Acetobacterales</taxon>
        <taxon>Acidocellaceae</taxon>
        <taxon>Acidiphilium</taxon>
    </lineage>
</organism>
<protein>
    <recommendedName>
        <fullName evidence="1">Molybdenum cofactor guanylyltransferase</fullName>
        <shortName evidence="1">MoCo guanylyltransferase</shortName>
        <ecNumber evidence="1">2.7.7.77</ecNumber>
    </recommendedName>
    <alternativeName>
        <fullName evidence="1">GTP:molybdopterin guanylyltransferase</fullName>
    </alternativeName>
    <alternativeName>
        <fullName evidence="1">Mo-MPT guanylyltransferase</fullName>
    </alternativeName>
    <alternativeName>
        <fullName evidence="1">Molybdopterin guanylyltransferase</fullName>
    </alternativeName>
    <alternativeName>
        <fullName evidence="1">Molybdopterin-guanine dinucleotide synthase</fullName>
        <shortName evidence="1">MGD synthase</shortName>
    </alternativeName>
</protein>
<name>MOBA_ACICJ</name>
<comment type="function">
    <text evidence="1">Transfers a GMP moiety from GTP to Mo-molybdopterin (Mo-MPT) cofactor (Moco or molybdenum cofactor) to form Mo-molybdopterin guanine dinucleotide (Mo-MGD) cofactor.</text>
</comment>
<comment type="catalytic activity">
    <reaction evidence="1">
        <text>Mo-molybdopterin + GTP + H(+) = Mo-molybdopterin guanine dinucleotide + diphosphate</text>
        <dbReference type="Rhea" id="RHEA:34243"/>
        <dbReference type="ChEBI" id="CHEBI:15378"/>
        <dbReference type="ChEBI" id="CHEBI:33019"/>
        <dbReference type="ChEBI" id="CHEBI:37565"/>
        <dbReference type="ChEBI" id="CHEBI:71302"/>
        <dbReference type="ChEBI" id="CHEBI:71310"/>
        <dbReference type="EC" id="2.7.7.77"/>
    </reaction>
</comment>
<comment type="cofactor">
    <cofactor evidence="1">
        <name>Mg(2+)</name>
        <dbReference type="ChEBI" id="CHEBI:18420"/>
    </cofactor>
</comment>
<comment type="subunit">
    <text evidence="1">Monomer.</text>
</comment>
<comment type="subcellular location">
    <subcellularLocation>
        <location evidence="1">Cytoplasm</location>
    </subcellularLocation>
</comment>
<comment type="domain">
    <text evidence="1">The N-terminal domain determines nucleotide recognition and specific binding, while the C-terminal domain determines the specific binding to the target protein.</text>
</comment>
<comment type="similarity">
    <text evidence="1">Belongs to the MobA family.</text>
</comment>